<sequence>MSIVTVPSATSKVQQIKTLISVACTVNHLKQIHVSLINHHLHHDTFLVNLLLKRTLFFRQTKYSYLLFSHTQFPNIFLYNSLINGFVNNHLFHETLDLFLSIRKHGLYLHGFTFPLVLKACTRASSRKLGIDLHSLVVKCGFNHDVAAMTSLLSIYSGSGRLNDAHKLFDEIPDRSVVTWTALFSGYTTSGRHREAIDLFKKMVEMGVKPDSYFIVQVLSACVHVGDLDSGEWIVKYMEEMEMQKNSFVRTTLVNLYAKCGKMEKARSVFDSMVEKDIVTWSTMIQGYASNSFPKEGIELFLQMLQENLKPDQFSIVGFLSSCASLGALDLGEWGISLIDRHEFLTNLFMANALIDMYAKCGAMARGFEVFKEMKEKDIVIMNAAISGLAKNGHVKLSFAVFGQTEKLGISPDGSTFLGLLCGCVHAGLIQDGLRFFNAISCVYALKRTVEHYGCMVDLWGRAGMLDDAYRLICDMPMRPNAIVWGALLSGCRLVKDTQLAETVLKELIALEPWNAGNYVQLSNIYSVGGRWDEAAEVRDMMNKKGMKKIPGYSWIELEGKVHEFLADDKSHPLSDKIYAKLEDLGNEMRLMGFVPTTEFVFFDVEEEEKERVLGYHSEKLAVALGLISTDHGQVIRVVKNLRVCGDCHEVMKLISKITRREIVVRDNNRFHCFTNGSCSCNDYW</sequence>
<evidence type="ECO:0000305" key="1"/>
<feature type="chain" id="PRO_0000356078" description="Putative pentatricopeptide repeat-containing protein At3g08820">
    <location>
        <begin position="1"/>
        <end position="685"/>
    </location>
</feature>
<feature type="repeat" description="PPR 1">
    <location>
        <begin position="75"/>
        <end position="109"/>
    </location>
</feature>
<feature type="repeat" description="PPR 2">
    <location>
        <begin position="110"/>
        <end position="144"/>
    </location>
</feature>
<feature type="repeat" description="PPR 3">
    <location>
        <begin position="145"/>
        <end position="175"/>
    </location>
</feature>
<feature type="repeat" description="PPR 4">
    <location>
        <begin position="176"/>
        <end position="210"/>
    </location>
</feature>
<feature type="repeat" description="PPR 5">
    <location>
        <begin position="211"/>
        <end position="245"/>
    </location>
</feature>
<feature type="repeat" description="PPR 6">
    <location>
        <begin position="246"/>
        <end position="276"/>
    </location>
</feature>
<feature type="repeat" description="PPR 7">
    <location>
        <begin position="277"/>
        <end position="311"/>
    </location>
</feature>
<feature type="repeat" description="PPR 8">
    <location>
        <begin position="312"/>
        <end position="346"/>
    </location>
</feature>
<feature type="repeat" description="PPR 9">
    <location>
        <begin position="347"/>
        <end position="381"/>
    </location>
</feature>
<feature type="repeat" description="PPR 10">
    <location>
        <begin position="383"/>
        <end position="412"/>
    </location>
</feature>
<feature type="repeat" description="PPR 11">
    <location>
        <begin position="413"/>
        <end position="443"/>
    </location>
</feature>
<feature type="repeat" description="PPR 12">
    <location>
        <begin position="449"/>
        <end position="479"/>
    </location>
</feature>
<feature type="region of interest" description="Type E motif">
    <location>
        <begin position="484"/>
        <end position="559"/>
    </location>
</feature>
<feature type="region of interest" description="Type E(+) motif">
    <location>
        <begin position="560"/>
        <end position="590"/>
    </location>
</feature>
<feature type="region of interest" description="Type DYW motif">
    <location>
        <begin position="591"/>
        <end position="685"/>
    </location>
</feature>
<protein>
    <recommendedName>
        <fullName>Putative pentatricopeptide repeat-containing protein At3g08820</fullName>
    </recommendedName>
</protein>
<organism>
    <name type="scientific">Arabidopsis thaliana</name>
    <name type="common">Mouse-ear cress</name>
    <dbReference type="NCBI Taxonomy" id="3702"/>
    <lineage>
        <taxon>Eukaryota</taxon>
        <taxon>Viridiplantae</taxon>
        <taxon>Streptophyta</taxon>
        <taxon>Embryophyta</taxon>
        <taxon>Tracheophyta</taxon>
        <taxon>Spermatophyta</taxon>
        <taxon>Magnoliopsida</taxon>
        <taxon>eudicotyledons</taxon>
        <taxon>Gunneridae</taxon>
        <taxon>Pentapetalae</taxon>
        <taxon>rosids</taxon>
        <taxon>malvids</taxon>
        <taxon>Brassicales</taxon>
        <taxon>Brassicaceae</taxon>
        <taxon>Camelineae</taxon>
        <taxon>Arabidopsis</taxon>
    </lineage>
</organism>
<keyword id="KW-1185">Reference proteome</keyword>
<keyword id="KW-0677">Repeat</keyword>
<proteinExistence type="inferred from homology"/>
<reference key="1">
    <citation type="journal article" date="2000" name="Nature">
        <title>Sequence and analysis of chromosome 3 of the plant Arabidopsis thaliana.</title>
        <authorList>
            <person name="Salanoubat M."/>
            <person name="Lemcke K."/>
            <person name="Rieger M."/>
            <person name="Ansorge W."/>
            <person name="Unseld M."/>
            <person name="Fartmann B."/>
            <person name="Valle G."/>
            <person name="Bloecker H."/>
            <person name="Perez-Alonso M."/>
            <person name="Obermaier B."/>
            <person name="Delseny M."/>
            <person name="Boutry M."/>
            <person name="Grivell L.A."/>
            <person name="Mache R."/>
            <person name="Puigdomenech P."/>
            <person name="De Simone V."/>
            <person name="Choisne N."/>
            <person name="Artiguenave F."/>
            <person name="Robert C."/>
            <person name="Brottier P."/>
            <person name="Wincker P."/>
            <person name="Cattolico L."/>
            <person name="Weissenbach J."/>
            <person name="Saurin W."/>
            <person name="Quetier F."/>
            <person name="Schaefer M."/>
            <person name="Mueller-Auer S."/>
            <person name="Gabel C."/>
            <person name="Fuchs M."/>
            <person name="Benes V."/>
            <person name="Wurmbach E."/>
            <person name="Drzonek H."/>
            <person name="Erfle H."/>
            <person name="Jordan N."/>
            <person name="Bangert S."/>
            <person name="Wiedelmann R."/>
            <person name="Kranz H."/>
            <person name="Voss H."/>
            <person name="Holland R."/>
            <person name="Brandt P."/>
            <person name="Nyakatura G."/>
            <person name="Vezzi A."/>
            <person name="D'Angelo M."/>
            <person name="Pallavicini A."/>
            <person name="Toppo S."/>
            <person name="Simionati B."/>
            <person name="Conrad A."/>
            <person name="Hornischer K."/>
            <person name="Kauer G."/>
            <person name="Loehnert T.-H."/>
            <person name="Nordsiek G."/>
            <person name="Reichelt J."/>
            <person name="Scharfe M."/>
            <person name="Schoen O."/>
            <person name="Bargues M."/>
            <person name="Terol J."/>
            <person name="Climent J."/>
            <person name="Navarro P."/>
            <person name="Collado C."/>
            <person name="Perez-Perez A."/>
            <person name="Ottenwaelder B."/>
            <person name="Duchemin D."/>
            <person name="Cooke R."/>
            <person name="Laudie M."/>
            <person name="Berger-Llauro C."/>
            <person name="Purnelle B."/>
            <person name="Masuy D."/>
            <person name="de Haan M."/>
            <person name="Maarse A.C."/>
            <person name="Alcaraz J.-P."/>
            <person name="Cottet A."/>
            <person name="Casacuberta E."/>
            <person name="Monfort A."/>
            <person name="Argiriou A."/>
            <person name="Flores M."/>
            <person name="Liguori R."/>
            <person name="Vitale D."/>
            <person name="Mannhaupt G."/>
            <person name="Haase D."/>
            <person name="Schoof H."/>
            <person name="Rudd S."/>
            <person name="Zaccaria P."/>
            <person name="Mewes H.-W."/>
            <person name="Mayer K.F.X."/>
            <person name="Kaul S."/>
            <person name="Town C.D."/>
            <person name="Koo H.L."/>
            <person name="Tallon L.J."/>
            <person name="Jenkins J."/>
            <person name="Rooney T."/>
            <person name="Rizzo M."/>
            <person name="Walts A."/>
            <person name="Utterback T."/>
            <person name="Fujii C.Y."/>
            <person name="Shea T.P."/>
            <person name="Creasy T.H."/>
            <person name="Haas B."/>
            <person name="Maiti R."/>
            <person name="Wu D."/>
            <person name="Peterson J."/>
            <person name="Van Aken S."/>
            <person name="Pai G."/>
            <person name="Militscher J."/>
            <person name="Sellers P."/>
            <person name="Gill J.E."/>
            <person name="Feldblyum T.V."/>
            <person name="Preuss D."/>
            <person name="Lin X."/>
            <person name="Nierman W.C."/>
            <person name="Salzberg S.L."/>
            <person name="White O."/>
            <person name="Venter J.C."/>
            <person name="Fraser C.M."/>
            <person name="Kaneko T."/>
            <person name="Nakamura Y."/>
            <person name="Sato S."/>
            <person name="Kato T."/>
            <person name="Asamizu E."/>
            <person name="Sasamoto S."/>
            <person name="Kimura T."/>
            <person name="Idesawa K."/>
            <person name="Kawashima K."/>
            <person name="Kishida Y."/>
            <person name="Kiyokawa C."/>
            <person name="Kohara M."/>
            <person name="Matsumoto M."/>
            <person name="Matsuno A."/>
            <person name="Muraki A."/>
            <person name="Nakayama S."/>
            <person name="Nakazaki N."/>
            <person name="Shinpo S."/>
            <person name="Takeuchi C."/>
            <person name="Wada T."/>
            <person name="Watanabe A."/>
            <person name="Yamada M."/>
            <person name="Yasuda M."/>
            <person name="Tabata S."/>
        </authorList>
    </citation>
    <scope>NUCLEOTIDE SEQUENCE [LARGE SCALE GENOMIC DNA]</scope>
    <source>
        <strain>cv. Columbia</strain>
    </source>
</reference>
<reference key="2">
    <citation type="journal article" date="2017" name="Plant J.">
        <title>Araport11: a complete reannotation of the Arabidopsis thaliana reference genome.</title>
        <authorList>
            <person name="Cheng C.Y."/>
            <person name="Krishnakumar V."/>
            <person name="Chan A.P."/>
            <person name="Thibaud-Nissen F."/>
            <person name="Schobel S."/>
            <person name="Town C.D."/>
        </authorList>
    </citation>
    <scope>GENOME REANNOTATION</scope>
    <source>
        <strain>cv. Columbia</strain>
    </source>
</reference>
<reference key="3">
    <citation type="journal article" date="2004" name="Plant Cell">
        <title>Genome-wide analysis of Arabidopsis pentatricopeptide repeat proteins reveals their essential role in organelle biogenesis.</title>
        <authorList>
            <person name="Lurin C."/>
            <person name="Andres C."/>
            <person name="Aubourg S."/>
            <person name="Bellaoui M."/>
            <person name="Bitton F."/>
            <person name="Bruyere C."/>
            <person name="Caboche M."/>
            <person name="Debast C."/>
            <person name="Gualberto J."/>
            <person name="Hoffmann B."/>
            <person name="Lecharny A."/>
            <person name="Le Ret M."/>
            <person name="Martin-Magniette M.-L."/>
            <person name="Mireau H."/>
            <person name="Peeters N."/>
            <person name="Renou J.-P."/>
            <person name="Szurek B."/>
            <person name="Taconnat L."/>
            <person name="Small I."/>
        </authorList>
    </citation>
    <scope>GENE FAMILY</scope>
</reference>
<gene>
    <name type="primary">PCMP-H84</name>
    <name type="ordered locus">At3g08820</name>
    <name type="ORF">F17O14.29</name>
    <name type="ORF">T16O11.25</name>
</gene>
<comment type="similarity">
    <text evidence="1">Belongs to the PPR family. PCMP-H subfamily.</text>
</comment>
<comment type="online information" name="Pentatricopeptide repeat proteins">
    <link uri="https://ppr.plantenergy.uwa.edu.au"/>
</comment>
<name>PP219_ARATH</name>
<dbReference type="EMBL" id="AC010871">
    <property type="protein sequence ID" value="AAF07847.1"/>
    <property type="molecule type" value="Genomic_DNA"/>
</dbReference>
<dbReference type="EMBL" id="AC012562">
    <property type="protein sequence ID" value="AAG51349.1"/>
    <property type="molecule type" value="Genomic_DNA"/>
</dbReference>
<dbReference type="EMBL" id="CP002686">
    <property type="protein sequence ID" value="AEE74683.1"/>
    <property type="molecule type" value="Genomic_DNA"/>
</dbReference>
<dbReference type="RefSeq" id="NP_187494.1">
    <property type="nucleotide sequence ID" value="NM_111716.2"/>
</dbReference>
<dbReference type="SMR" id="Q9SR82"/>
<dbReference type="BioGRID" id="5364">
    <property type="interactions" value="2"/>
</dbReference>
<dbReference type="FunCoup" id="Q9SR82">
    <property type="interactions" value="220"/>
</dbReference>
<dbReference type="PaxDb" id="3702-AT3G08820.1"/>
<dbReference type="ProteomicsDB" id="249091"/>
<dbReference type="EnsemblPlants" id="AT3G08820.1">
    <property type="protein sequence ID" value="AT3G08820.1"/>
    <property type="gene ID" value="AT3G08820"/>
</dbReference>
<dbReference type="GeneID" id="820029"/>
<dbReference type="Gramene" id="AT3G08820.1">
    <property type="protein sequence ID" value="AT3G08820.1"/>
    <property type="gene ID" value="AT3G08820"/>
</dbReference>
<dbReference type="KEGG" id="ath:AT3G08820"/>
<dbReference type="Araport" id="AT3G08820"/>
<dbReference type="TAIR" id="AT3G08820"/>
<dbReference type="eggNOG" id="KOG4197">
    <property type="taxonomic scope" value="Eukaryota"/>
</dbReference>
<dbReference type="HOGENOM" id="CLU_002706_15_1_1"/>
<dbReference type="InParanoid" id="Q9SR82"/>
<dbReference type="OMA" id="WNSGHYV"/>
<dbReference type="PhylomeDB" id="Q9SR82"/>
<dbReference type="PRO" id="PR:Q9SR82"/>
<dbReference type="Proteomes" id="UP000006548">
    <property type="component" value="Chromosome 3"/>
</dbReference>
<dbReference type="ExpressionAtlas" id="Q9SR82">
    <property type="expression patterns" value="baseline and differential"/>
</dbReference>
<dbReference type="GO" id="GO:0003723">
    <property type="term" value="F:RNA binding"/>
    <property type="evidence" value="ECO:0007669"/>
    <property type="project" value="InterPro"/>
</dbReference>
<dbReference type="GO" id="GO:0008270">
    <property type="term" value="F:zinc ion binding"/>
    <property type="evidence" value="ECO:0007669"/>
    <property type="project" value="InterPro"/>
</dbReference>
<dbReference type="GO" id="GO:0009451">
    <property type="term" value="P:RNA modification"/>
    <property type="evidence" value="ECO:0007669"/>
    <property type="project" value="InterPro"/>
</dbReference>
<dbReference type="FunFam" id="1.25.40.10:FF:000344">
    <property type="entry name" value="Pentatricopeptide repeat-containing protein"/>
    <property type="match status" value="1"/>
</dbReference>
<dbReference type="FunFam" id="1.25.40.10:FF:000511">
    <property type="entry name" value="Pentatricopeptide repeat-containing protein"/>
    <property type="match status" value="1"/>
</dbReference>
<dbReference type="FunFam" id="1.25.40.10:FF:000450">
    <property type="entry name" value="Putative pentatricopeptide repeat-containing protein"/>
    <property type="match status" value="1"/>
</dbReference>
<dbReference type="Gene3D" id="1.25.40.10">
    <property type="entry name" value="Tetratricopeptide repeat domain"/>
    <property type="match status" value="3"/>
</dbReference>
<dbReference type="InterPro" id="IPR032867">
    <property type="entry name" value="DYW_dom"/>
</dbReference>
<dbReference type="InterPro" id="IPR046848">
    <property type="entry name" value="E_motif"/>
</dbReference>
<dbReference type="InterPro" id="IPR046849">
    <property type="entry name" value="Eplus_motif"/>
</dbReference>
<dbReference type="InterPro" id="IPR002885">
    <property type="entry name" value="Pentatricopeptide_rpt"/>
</dbReference>
<dbReference type="InterPro" id="IPR046960">
    <property type="entry name" value="PPR_At4g14850-like_plant"/>
</dbReference>
<dbReference type="InterPro" id="IPR011990">
    <property type="entry name" value="TPR-like_helical_dom_sf"/>
</dbReference>
<dbReference type="NCBIfam" id="TIGR00756">
    <property type="entry name" value="PPR"/>
    <property type="match status" value="5"/>
</dbReference>
<dbReference type="PANTHER" id="PTHR47926:SF446">
    <property type="entry name" value="PENTACOTRIPEPTIDE-REPEAT REGION OF PRORP DOMAIN-CONTAINING PROTEIN"/>
    <property type="match status" value="1"/>
</dbReference>
<dbReference type="PANTHER" id="PTHR47926">
    <property type="entry name" value="PENTATRICOPEPTIDE REPEAT-CONTAINING PROTEIN"/>
    <property type="match status" value="1"/>
</dbReference>
<dbReference type="Pfam" id="PF14432">
    <property type="entry name" value="DYW_deaminase"/>
    <property type="match status" value="1"/>
</dbReference>
<dbReference type="Pfam" id="PF20431">
    <property type="entry name" value="E_motif"/>
    <property type="match status" value="1"/>
</dbReference>
<dbReference type="Pfam" id="PF20430">
    <property type="entry name" value="Eplus_motif"/>
    <property type="match status" value="1"/>
</dbReference>
<dbReference type="Pfam" id="PF01535">
    <property type="entry name" value="PPR"/>
    <property type="match status" value="5"/>
</dbReference>
<dbReference type="Pfam" id="PF13041">
    <property type="entry name" value="PPR_2"/>
    <property type="match status" value="2"/>
</dbReference>
<dbReference type="SUPFAM" id="SSF81901">
    <property type="entry name" value="HCP-like"/>
    <property type="match status" value="1"/>
</dbReference>
<dbReference type="PROSITE" id="PS51375">
    <property type="entry name" value="PPR"/>
    <property type="match status" value="12"/>
</dbReference>
<accession>Q9SR82</accession>